<comment type="function">
    <text evidence="1">Essential factor for the assembly of mitochondrial NADH:ubiquinone oxidoreductase complex (complex I).</text>
</comment>
<comment type="subunit">
    <text evidence="1">Interacts with NDUFAF4, NDUFS2 and NDUFS3.</text>
</comment>
<comment type="subcellular location">
    <subcellularLocation>
        <location evidence="1">Mitochondrion inner membrane</location>
    </subcellularLocation>
    <subcellularLocation>
        <location evidence="2">Nucleus</location>
    </subcellularLocation>
</comment>
<comment type="alternative products">
    <event type="alternative splicing"/>
    <isoform>
        <id>O08776-1</id>
        <name>1</name>
        <sequence type="displayed"/>
    </isoform>
    <isoform>
        <id>O08776-2</id>
        <name>2</name>
        <sequence type="described" ref="VSP_023993 VSP_023996"/>
    </isoform>
    <isoform>
        <id>O08776-3</id>
        <name>3</name>
        <sequence type="described" ref="VSP_023994 VSP_023995"/>
    </isoform>
    <isoform>
        <id>O08776-4</id>
        <name>4</name>
        <sequence type="described" ref="VSP_023992"/>
    </isoform>
</comment>
<comment type="tissue specificity">
    <text evidence="2">Expressed in testis.</text>
</comment>
<comment type="similarity">
    <text evidence="5">Belongs to the NDUFAF3 family.</text>
</comment>
<gene>
    <name type="primary">Ndufaf3</name>
</gene>
<evidence type="ECO:0000250" key="1"/>
<evidence type="ECO:0000269" key="2">
    <source>
    </source>
</evidence>
<evidence type="ECO:0000303" key="3">
    <source>
    </source>
</evidence>
<evidence type="ECO:0000303" key="4">
    <source>
    </source>
</evidence>
<evidence type="ECO:0000305" key="5"/>
<accession>O08776</accession>
<accession>O08777</accession>
<accession>Q6AXV1</accession>
<accession>Q78E24</accession>
<keyword id="KW-0025">Alternative splicing</keyword>
<keyword id="KW-0472">Membrane</keyword>
<keyword id="KW-0496">Mitochondrion</keyword>
<keyword id="KW-0999">Mitochondrion inner membrane</keyword>
<keyword id="KW-0539">Nucleus</keyword>
<keyword id="KW-1185">Reference proteome</keyword>
<sequence length="185" mass="20696">MATALGFRCLYRTRPATLGRYVDRLWRSPSRGHRLSPADDELYQRTRISLLQNEFPQAVYIDSYNSRGFTINGNRVFGPCALLPQTVVQWNVGSHQDITEESFSIFWMLEPRIEIVVVGTGNKTERLHSQVLQAMRQRGIAVEIQDTPNACATFNFLCHEGRVTGAALIPPPGETALASSGQTTE</sequence>
<protein>
    <recommendedName>
        <fullName>NADH dehydrogenase [ubiquinone] 1 alpha subcomplex assembly factor 3</fullName>
    </recommendedName>
    <alternativeName>
        <fullName>Nuclear protein E3-3</fullName>
    </alternativeName>
</protein>
<feature type="chain" id="PRO_0000281158" description="NADH dehydrogenase [ubiquinone] 1 alpha subcomplex assembly factor 3">
    <location>
        <begin position="1"/>
        <end position="185"/>
    </location>
</feature>
<feature type="splice variant" id="VSP_023992" description="In isoform 4." evidence="3">
    <location>
        <begin position="21"/>
        <end position="26"/>
    </location>
</feature>
<feature type="splice variant" id="VSP_023994" description="In isoform 3." evidence="4">
    <original>GSHQDITEESFSIFWML</original>
    <variation>SPPLHCNLYVVPKATPS</variation>
    <location>
        <begin position="93"/>
        <end position="109"/>
    </location>
</feature>
<feature type="splice variant" id="VSP_023993" description="In isoform 2." evidence="4">
    <original>GSHQDITE</original>
    <variation>SPPLHCNL</variation>
    <location>
        <begin position="93"/>
        <end position="100"/>
    </location>
</feature>
<feature type="splice variant" id="VSP_023996" description="In isoform 2." evidence="4">
    <location>
        <begin position="101"/>
        <end position="185"/>
    </location>
</feature>
<feature type="splice variant" id="VSP_023995" description="In isoform 3." evidence="4">
    <location>
        <begin position="110"/>
        <end position="185"/>
    </location>
</feature>
<reference key="1">
    <citation type="journal article" date="1997" name="Biochim. Biophys. Acta">
        <title>Molecular cloning of a novel alternatively spliced nuclear protein.</title>
        <authorList>
            <person name="Hartmann A.M."/>
            <person name="Stamm S."/>
        </authorList>
    </citation>
    <scope>NUCLEOTIDE SEQUENCE [MRNA] (ISOFORMS 1; 2 AND 3)</scope>
    <scope>SUBCELLULAR LOCATION</scope>
    <scope>TISSUE SPECIFICITY</scope>
    <source>
        <tissue>Testis</tissue>
    </source>
</reference>
<reference key="2">
    <citation type="journal article" date="2004" name="Genome Res.">
        <title>The status, quality, and expansion of the NIH full-length cDNA project: the Mammalian Gene Collection (MGC).</title>
        <authorList>
            <consortium name="The MGC Project Team"/>
        </authorList>
    </citation>
    <scope>NUCLEOTIDE SEQUENCE [LARGE SCALE MRNA] (ISOFORM 4)</scope>
    <source>
        <tissue>Testis</tissue>
    </source>
</reference>
<proteinExistence type="evidence at transcript level"/>
<dbReference type="EMBL" id="U95160">
    <property type="protein sequence ID" value="AAB54063.1"/>
    <property type="molecule type" value="mRNA"/>
</dbReference>
<dbReference type="EMBL" id="U95161">
    <property type="protein sequence ID" value="AAB54064.1"/>
    <property type="molecule type" value="mRNA"/>
</dbReference>
<dbReference type="EMBL" id="U95162">
    <property type="protein sequence ID" value="AAB54065.1"/>
    <property type="molecule type" value="mRNA"/>
</dbReference>
<dbReference type="EMBL" id="BC079306">
    <property type="protein sequence ID" value="AAH79306.1"/>
    <property type="molecule type" value="mRNA"/>
</dbReference>
<dbReference type="RefSeq" id="NP_001029143.1">
    <molecule id="O08776-4"/>
    <property type="nucleotide sequence ID" value="NM_001033971.2"/>
</dbReference>
<dbReference type="RefSeq" id="NP_064465.1">
    <molecule id="O08776-1"/>
    <property type="nucleotide sequence ID" value="NM_020080.3"/>
</dbReference>
<dbReference type="SMR" id="O08776"/>
<dbReference type="FunCoup" id="O08776">
    <property type="interactions" value="1835"/>
</dbReference>
<dbReference type="IntAct" id="O08776">
    <property type="interactions" value="2"/>
</dbReference>
<dbReference type="STRING" id="10116.ENSRNOP00000027262"/>
<dbReference type="PhosphoSitePlus" id="O08776"/>
<dbReference type="PaxDb" id="10116-ENSRNOP00000027262"/>
<dbReference type="Ensembl" id="ENSRNOT00000027262.6">
    <molecule id="O08776-4"/>
    <property type="protein sequence ID" value="ENSRNOP00000027262.5"/>
    <property type="gene ID" value="ENSRNOG00000020068.6"/>
</dbReference>
<dbReference type="Ensembl" id="ENSRNOT00000110739.1">
    <molecule id="O08776-1"/>
    <property type="protein sequence ID" value="ENSRNOP00000091967.1"/>
    <property type="gene ID" value="ENSRNOG00000020068.6"/>
</dbReference>
<dbReference type="GeneID" id="56769"/>
<dbReference type="KEGG" id="rno:56769"/>
<dbReference type="AGR" id="RGD:708545"/>
<dbReference type="CTD" id="25915"/>
<dbReference type="RGD" id="708545">
    <property type="gene designation" value="Ndufaf3"/>
</dbReference>
<dbReference type="eggNOG" id="KOG3363">
    <property type="taxonomic scope" value="Eukaryota"/>
</dbReference>
<dbReference type="GeneTree" id="ENSGT00390000018312"/>
<dbReference type="HOGENOM" id="CLU_074390_3_1_1"/>
<dbReference type="InParanoid" id="O08776"/>
<dbReference type="OMA" id="FSKAYDH"/>
<dbReference type="OrthoDB" id="20681at2759"/>
<dbReference type="PhylomeDB" id="O08776"/>
<dbReference type="TreeFam" id="TF321072"/>
<dbReference type="Reactome" id="R-RNO-6799198">
    <property type="pathway name" value="Complex I biogenesis"/>
</dbReference>
<dbReference type="PRO" id="PR:O08776"/>
<dbReference type="Proteomes" id="UP000002494">
    <property type="component" value="Chromosome 8"/>
</dbReference>
<dbReference type="Bgee" id="ENSRNOG00000020068">
    <property type="expression patterns" value="Expressed in testis and 20 other cell types or tissues"/>
</dbReference>
<dbReference type="GO" id="GO:0005743">
    <property type="term" value="C:mitochondrial inner membrane"/>
    <property type="evidence" value="ECO:0000266"/>
    <property type="project" value="RGD"/>
</dbReference>
<dbReference type="GO" id="GO:0005634">
    <property type="term" value="C:nucleus"/>
    <property type="evidence" value="ECO:0007669"/>
    <property type="project" value="UniProtKB-SubCell"/>
</dbReference>
<dbReference type="GO" id="GO:0032981">
    <property type="term" value="P:mitochondrial respiratory chain complex I assembly"/>
    <property type="evidence" value="ECO:0000266"/>
    <property type="project" value="RGD"/>
</dbReference>
<dbReference type="CDD" id="cd05125">
    <property type="entry name" value="Mth938_2P1-like"/>
    <property type="match status" value="1"/>
</dbReference>
<dbReference type="FunFam" id="3.40.1230.10:FF:000002">
    <property type="entry name" value="NADH dehydrogenase [ubiquinone] 1 alpha subcomplex assembly factor 3"/>
    <property type="match status" value="1"/>
</dbReference>
<dbReference type="Gene3D" id="3.40.1230.10">
    <property type="entry name" value="MTH938-like"/>
    <property type="match status" value="1"/>
</dbReference>
<dbReference type="InterPro" id="IPR036748">
    <property type="entry name" value="MTH938-like_sf"/>
</dbReference>
<dbReference type="InterPro" id="IPR034095">
    <property type="entry name" value="NDUF3"/>
</dbReference>
<dbReference type="InterPro" id="IPR007523">
    <property type="entry name" value="NDUFAF3/AAMDC"/>
</dbReference>
<dbReference type="PANTHER" id="PTHR21192:SF2">
    <property type="entry name" value="NADH DEHYDROGENASE [UBIQUINONE] 1 ALPHA SUBCOMPLEX ASSEMBLY FACTOR 3"/>
    <property type="match status" value="1"/>
</dbReference>
<dbReference type="PANTHER" id="PTHR21192">
    <property type="entry name" value="NUCLEAR PROTEIN E3-3"/>
    <property type="match status" value="1"/>
</dbReference>
<dbReference type="Pfam" id="PF04430">
    <property type="entry name" value="DUF498"/>
    <property type="match status" value="1"/>
</dbReference>
<dbReference type="SUPFAM" id="SSF64076">
    <property type="entry name" value="MTH938-like"/>
    <property type="match status" value="1"/>
</dbReference>
<organism>
    <name type="scientific">Rattus norvegicus</name>
    <name type="common">Rat</name>
    <dbReference type="NCBI Taxonomy" id="10116"/>
    <lineage>
        <taxon>Eukaryota</taxon>
        <taxon>Metazoa</taxon>
        <taxon>Chordata</taxon>
        <taxon>Craniata</taxon>
        <taxon>Vertebrata</taxon>
        <taxon>Euteleostomi</taxon>
        <taxon>Mammalia</taxon>
        <taxon>Eutheria</taxon>
        <taxon>Euarchontoglires</taxon>
        <taxon>Glires</taxon>
        <taxon>Rodentia</taxon>
        <taxon>Myomorpha</taxon>
        <taxon>Muroidea</taxon>
        <taxon>Muridae</taxon>
        <taxon>Murinae</taxon>
        <taxon>Rattus</taxon>
    </lineage>
</organism>
<name>NDUF3_RAT</name>